<dbReference type="EC" id="5.3.1.23" evidence="1 2"/>
<dbReference type="EMBL" id="CU928161">
    <property type="protein sequence ID" value="CAR06048.1"/>
    <property type="molecule type" value="Genomic_DNA"/>
</dbReference>
<dbReference type="RefSeq" id="WP_001022014.1">
    <property type="nucleotide sequence ID" value="NC_011742.1"/>
</dbReference>
<dbReference type="SMR" id="B7MMH6"/>
<dbReference type="KEGG" id="ecz:ECS88_4902"/>
<dbReference type="HOGENOM" id="CLU_016218_1_2_6"/>
<dbReference type="UniPathway" id="UPA00904">
    <property type="reaction ID" value="UER00874"/>
</dbReference>
<dbReference type="Proteomes" id="UP000000747">
    <property type="component" value="Chromosome"/>
</dbReference>
<dbReference type="GO" id="GO:0046523">
    <property type="term" value="F:S-methyl-5-thioribose-1-phosphate isomerase activity"/>
    <property type="evidence" value="ECO:0007669"/>
    <property type="project" value="UniProtKB-UniRule"/>
</dbReference>
<dbReference type="GO" id="GO:0019509">
    <property type="term" value="P:L-methionine salvage from methylthioadenosine"/>
    <property type="evidence" value="ECO:0007669"/>
    <property type="project" value="UniProtKB-UniRule"/>
</dbReference>
<dbReference type="FunFam" id="1.20.120.420:FF:000003">
    <property type="entry name" value="Methylthioribose-1-phosphate isomerase"/>
    <property type="match status" value="1"/>
</dbReference>
<dbReference type="FunFam" id="3.40.50.10470:FF:000006">
    <property type="entry name" value="Methylthioribose-1-phosphate isomerase"/>
    <property type="match status" value="1"/>
</dbReference>
<dbReference type="Gene3D" id="1.20.120.420">
    <property type="entry name" value="translation initiation factor eif-2b, domain 1"/>
    <property type="match status" value="1"/>
</dbReference>
<dbReference type="Gene3D" id="3.40.50.10470">
    <property type="entry name" value="Translation initiation factor eif-2b, domain 2"/>
    <property type="match status" value="1"/>
</dbReference>
<dbReference type="HAMAP" id="MF_01678">
    <property type="entry name" value="Salvage_MtnA"/>
    <property type="match status" value="1"/>
</dbReference>
<dbReference type="InterPro" id="IPR000649">
    <property type="entry name" value="IF-2B-related"/>
</dbReference>
<dbReference type="InterPro" id="IPR005251">
    <property type="entry name" value="IF-M1Pi"/>
</dbReference>
<dbReference type="InterPro" id="IPR042529">
    <property type="entry name" value="IF_2B-like_C"/>
</dbReference>
<dbReference type="InterPro" id="IPR011559">
    <property type="entry name" value="Initiation_fac_2B_a/b/d"/>
</dbReference>
<dbReference type="InterPro" id="IPR027363">
    <property type="entry name" value="M1Pi_N"/>
</dbReference>
<dbReference type="InterPro" id="IPR037171">
    <property type="entry name" value="NagB/RpiA_transferase-like"/>
</dbReference>
<dbReference type="NCBIfam" id="TIGR00524">
    <property type="entry name" value="eIF-2B_rel"/>
    <property type="match status" value="1"/>
</dbReference>
<dbReference type="NCBIfam" id="NF004326">
    <property type="entry name" value="PRK05720.1"/>
    <property type="match status" value="1"/>
</dbReference>
<dbReference type="NCBIfam" id="TIGR00512">
    <property type="entry name" value="salvage_mtnA"/>
    <property type="match status" value="1"/>
</dbReference>
<dbReference type="PANTHER" id="PTHR43475">
    <property type="entry name" value="METHYLTHIORIBOSE-1-PHOSPHATE ISOMERASE"/>
    <property type="match status" value="1"/>
</dbReference>
<dbReference type="PANTHER" id="PTHR43475:SF1">
    <property type="entry name" value="METHYLTHIORIBOSE-1-PHOSPHATE ISOMERASE"/>
    <property type="match status" value="1"/>
</dbReference>
<dbReference type="Pfam" id="PF01008">
    <property type="entry name" value="IF-2B"/>
    <property type="match status" value="1"/>
</dbReference>
<dbReference type="SUPFAM" id="SSF100950">
    <property type="entry name" value="NagB/RpiA/CoA transferase-like"/>
    <property type="match status" value="1"/>
</dbReference>
<sequence>MNIKGKHYRTVWVSGDGKAVEIIDQTKLPFKFEVVALTSAEMAATAIQDMWVRGAPLIGVVAAYGIALGMNHDASDMGLQRYYDLLIKTRPTAINLKWALDRMIDTLKDLCVSERKDVAWALAAEIAEEDVALCEQIGLHGAEVIREIAQKKPAGSVVNILTHCNAGWLATVDWGTALSPIYKAHENGIPVHVWVDETRPRNQGGLTAFELGSHGIPHTLIADNAGGHLMQHGDVDLCIVGTDRTTARGDVCNKIGTYLKALAAHDNHVPFYVALPSPTIDWTIEDGKSIPIEQRDGKEQSHVYGINPQGELSWVNTAPEGTRCGNYAFDVTPARYITGFITERGVCAASKSALADMFADLKSKALQGEQH</sequence>
<organism>
    <name type="scientific">Escherichia coli O45:K1 (strain S88 / ExPEC)</name>
    <dbReference type="NCBI Taxonomy" id="585035"/>
    <lineage>
        <taxon>Bacteria</taxon>
        <taxon>Pseudomonadati</taxon>
        <taxon>Pseudomonadota</taxon>
        <taxon>Gammaproteobacteria</taxon>
        <taxon>Enterobacterales</taxon>
        <taxon>Enterobacteriaceae</taxon>
        <taxon>Escherichia</taxon>
    </lineage>
</organism>
<proteinExistence type="evidence at protein level"/>
<feature type="chain" id="PRO_1000187357" description="Methylthioribose-1-phosphate isomerase">
    <location>
        <begin position="1"/>
        <end position="371"/>
    </location>
</feature>
<feature type="active site" description="Proton donor" evidence="1">
    <location>
        <position position="243"/>
    </location>
</feature>
<feature type="binding site" evidence="1">
    <location>
        <begin position="53"/>
        <end position="55"/>
    </location>
    <ligand>
        <name>substrate</name>
    </ligand>
</feature>
<feature type="binding site" evidence="1">
    <location>
        <position position="90"/>
    </location>
    <ligand>
        <name>substrate</name>
    </ligand>
</feature>
<feature type="binding site" evidence="1">
    <location>
        <position position="203"/>
    </location>
    <ligand>
        <name>substrate</name>
    </ligand>
</feature>
<feature type="binding site" evidence="1">
    <location>
        <begin position="253"/>
        <end position="254"/>
    </location>
    <ligand>
        <name>substrate</name>
    </ligand>
</feature>
<feature type="site" description="Transition state stabilizer" evidence="1">
    <location>
        <position position="164"/>
    </location>
</feature>
<evidence type="ECO:0000255" key="1">
    <source>
        <dbReference type="HAMAP-Rule" id="MF_01678"/>
    </source>
</evidence>
<evidence type="ECO:0000269" key="2">
    <source>
    </source>
</evidence>
<evidence type="ECO:0000303" key="3">
    <source>
    </source>
</evidence>
<evidence type="ECO:0000305" key="4"/>
<protein>
    <recommendedName>
        <fullName evidence="1">Methylthioribose-1-phosphate isomerase</fullName>
        <shortName evidence="1">M1Pi</shortName>
        <shortName evidence="1">MTR-1-P isomerase</shortName>
        <ecNumber evidence="1 2">5.3.1.23</ecNumber>
    </recommendedName>
    <alternativeName>
        <fullName evidence="1">S-methyl-5-thioribose-1-phosphate isomerase</fullName>
    </alternativeName>
</protein>
<accession>B7MMH6</accession>
<reference key="1">
    <citation type="journal article" date="2009" name="PLoS Genet.">
        <title>Organised genome dynamics in the Escherichia coli species results in highly diverse adaptive paths.</title>
        <authorList>
            <person name="Touchon M."/>
            <person name="Hoede C."/>
            <person name="Tenaillon O."/>
            <person name="Barbe V."/>
            <person name="Baeriswyl S."/>
            <person name="Bidet P."/>
            <person name="Bingen E."/>
            <person name="Bonacorsi S."/>
            <person name="Bouchier C."/>
            <person name="Bouvet O."/>
            <person name="Calteau A."/>
            <person name="Chiapello H."/>
            <person name="Clermont O."/>
            <person name="Cruveiller S."/>
            <person name="Danchin A."/>
            <person name="Diard M."/>
            <person name="Dossat C."/>
            <person name="Karoui M.E."/>
            <person name="Frapy E."/>
            <person name="Garry L."/>
            <person name="Ghigo J.M."/>
            <person name="Gilles A.M."/>
            <person name="Johnson J."/>
            <person name="Le Bouguenec C."/>
            <person name="Lescat M."/>
            <person name="Mangenot S."/>
            <person name="Martinez-Jehanne V."/>
            <person name="Matic I."/>
            <person name="Nassif X."/>
            <person name="Oztas S."/>
            <person name="Petit M.A."/>
            <person name="Pichon C."/>
            <person name="Rouy Z."/>
            <person name="Ruf C.S."/>
            <person name="Schneider D."/>
            <person name="Tourret J."/>
            <person name="Vacherie B."/>
            <person name="Vallenet D."/>
            <person name="Medigue C."/>
            <person name="Rocha E.P.C."/>
            <person name="Denamur E."/>
        </authorList>
    </citation>
    <scope>NUCLEOTIDE SEQUENCE [LARGE SCALE GENOMIC DNA]</scope>
    <source>
        <strain>S88 / ExPEC</strain>
    </source>
</reference>
<reference key="2">
    <citation type="journal article" date="2020" name="Mol. Microbiol.">
        <title>A bifunctional salvage pathway for two distinct S-adenosylmethionine by-products that is widespread in bacteria, including pathogenic Escherichia coli.</title>
        <authorList>
            <person name="North J.A."/>
            <person name="Wildenthal J.A."/>
            <person name="Erb T.J."/>
            <person name="Evans B.S."/>
            <person name="Byerly K.M."/>
            <person name="Gerlt J.A."/>
            <person name="Tabita F.R."/>
        </authorList>
    </citation>
    <scope>FUNCTION</scope>
    <scope>CATALYTIC ACTIVITY</scope>
    <scope>BIOPHYSICOCHEMICAL PROPERTIES</scope>
    <scope>DISRUPTION PHENOTYPE</scope>
    <source>
        <strain>ATCC 25922 / DSM 1103 / NCIB 12210 / ExPEC</strain>
    </source>
</reference>
<keyword id="KW-0028">Amino-acid biosynthesis</keyword>
<keyword id="KW-0413">Isomerase</keyword>
<keyword id="KW-0486">Methionine biosynthesis</keyword>
<keyword id="KW-1185">Reference proteome</keyword>
<gene>
    <name evidence="1 3" type="primary">mtnA</name>
    <name type="ordered locus">ECS88_4902</name>
</gene>
<comment type="function">
    <text evidence="2">Catalyzes the interconversion of methylthioribose-1-phosphate (MTR-1-P) into methylthioribulose-1-phosphate (MTRu-1-P) (PubMed:31950558). Also catalyzes the interconversion of 5-deoxyribose 1-phosphate and 5-deoxyribulose 1-phosphate (PubMed:31950558). Part of a bifunctional DHAP-shunt salvage pathway for SAM by-products (PubMed:31950558).</text>
</comment>
<comment type="catalytic activity">
    <reaction evidence="1 2">
        <text>5-(methylsulfanyl)-alpha-D-ribose 1-phosphate = 5-(methylsulfanyl)-D-ribulose 1-phosphate</text>
        <dbReference type="Rhea" id="RHEA:19989"/>
        <dbReference type="ChEBI" id="CHEBI:58533"/>
        <dbReference type="ChEBI" id="CHEBI:58548"/>
        <dbReference type="EC" id="5.3.1.23"/>
    </reaction>
    <physiologicalReaction direction="left-to-right" evidence="2">
        <dbReference type="Rhea" id="RHEA:19990"/>
    </physiologicalReaction>
</comment>
<comment type="catalytic activity">
    <reaction evidence="2">
        <text>5-deoxy-alpha-D-ribose 1-phosphate = 5-deoxy-D-ribulose 1-phosphate</text>
        <dbReference type="Rhea" id="RHEA:61296"/>
        <dbReference type="ChEBI" id="CHEBI:58749"/>
        <dbReference type="ChEBI" id="CHEBI:144504"/>
    </reaction>
    <physiologicalReaction direction="left-to-right" evidence="2">
        <dbReference type="Rhea" id="RHEA:61297"/>
    </physiologicalReaction>
</comment>
<comment type="biophysicochemical properties">
    <kinetics>
        <KM evidence="2">50 uM for 5-methylthioribose-1-phosphate</KM>
        <KM evidence="2">222 uM for 5-deoxyribose 1-phosphate</KM>
        <text evidence="2">kcat is 0.49 sec(-1) with 5-methylthioribose-1-phosphate as substrate. kcat is 2.02 sec(-1) with 5-deoxyribose 1-phosphate as substrate. kcat is 0.67 sec(-1) with ribose-1-phosphate as substrate.</text>
    </kinetics>
</comment>
<comment type="pathway">
    <text evidence="1">Amino-acid biosynthesis; L-methionine biosynthesis via salvage pathway; L-methionine from S-methyl-5-thio-alpha-D-ribose 1-phosphate: step 1/6.</text>
</comment>
<comment type="disruption phenotype">
    <text evidence="2">Inactivation of the gene precludes growth of the strain with 5-deoxyribose.</text>
</comment>
<comment type="similarity">
    <text evidence="4">Belongs to the eIF-2B alpha/beta/delta subunits family. MtnA subfamily.</text>
</comment>
<name>MTNA_ECO45</name>